<keyword id="KW-0106">Calcium</keyword>
<keyword id="KW-0966">Cell projection</keyword>
<keyword id="KW-0969">Cilium</keyword>
<keyword id="KW-0903">Direct protein sequencing</keyword>
<keyword id="KW-0282">Flagellum</keyword>
<keyword id="KW-0479">Metal-binding</keyword>
<keyword id="KW-0677">Repeat</keyword>
<accession>Q26678</accession>
<comment type="function">
    <text>May contribute to the rapid motility of the trypanosomes, playing a role either in flagellar structure or in calcium metabolism. Could alternate between a GDP-bound inactive form to a calcium/GTP-bound active form.</text>
</comment>
<comment type="subcellular location">
    <subcellularLocation>
        <location>Cell projection</location>
        <location>Cilium</location>
        <location>Flagellum</location>
    </subcellularLocation>
</comment>
<comment type="domain">
    <text>This protein has 8 EF-hand domains, 6 of which may be functional calcium-binding sites.</text>
</comment>
<comment type="similarity">
    <text evidence="4">Belongs to the calflagin family.</text>
</comment>
<reference key="1">
    <citation type="journal article" date="1994" name="Biochem. J.">
        <title>The gene family of EF-hand calcium-binding proteins from the flagellum of Trypanosoma brucei.</title>
        <authorList>
            <person name="Wu Y."/>
            <person name="Deford J."/>
            <person name="Benjamin R."/>
            <person name="Lee M.G.-S."/>
            <person name="Ruben L."/>
        </authorList>
    </citation>
    <scope>NUCLEOTIDE SEQUENCE [MRNA]</scope>
    <scope>PARTIAL PROTEIN SEQUENCE</scope>
    <source>
        <strain>ISTar1</strain>
        <strain>M110</strain>
    </source>
</reference>
<evidence type="ECO:0000255" key="1"/>
<evidence type="ECO:0000255" key="2">
    <source>
        <dbReference type="PROSITE-ProRule" id="PRU00448"/>
    </source>
</evidence>
<evidence type="ECO:0000256" key="3">
    <source>
        <dbReference type="SAM" id="MobiDB-lite"/>
    </source>
</evidence>
<evidence type="ECO:0000305" key="4"/>
<sequence length="407" mass="45940">MGCSASKDTTNSKDGAASKGGKDGKTTADRKVAWERIRCAIPRDKDAESKSRRIELFKRFDTNGTGKLSFREVLDGCYSILKLDEFTTHLPDIVQRAFDKAKDLGNKVKGVGEEDLVEFLEFRLMLCYIYDIFELTVMFDTMDKDGSLLLELQEFKEALPKWKEWGVDITDATTVFNEIDTNGSGVVTFDEFSCWAVTKKLQVCGDPDGEGAAKTTADRKVAWERIRCAIPRDKDAESKSRRIELFKQFDTNGTGKLGFREVLDGCYSILKLDEFTTHLPDIVQRAFDKAKDLGNKVKGVGEEDLVEFLEFRLMLCYIYDIFELTVMFDTMDKDGSLLLELQEFKEALKKWKEWGVDITDATTVFNEIDTNGSGVVTFDEFSCWAVTKKLQVCGDPDGEENGANEGN</sequence>
<proteinExistence type="evidence at protein level"/>
<organism>
    <name type="scientific">Trypanosoma brucei brucei</name>
    <dbReference type="NCBI Taxonomy" id="5702"/>
    <lineage>
        <taxon>Eukaryota</taxon>
        <taxon>Discoba</taxon>
        <taxon>Euglenozoa</taxon>
        <taxon>Kinetoplastea</taxon>
        <taxon>Metakinetoplastina</taxon>
        <taxon>Trypanosomatida</taxon>
        <taxon>Trypanosomatidae</taxon>
        <taxon>Trypanosoma</taxon>
    </lineage>
</organism>
<dbReference type="EMBL" id="U06463">
    <property type="protein sequence ID" value="AAA75583.1"/>
    <property type="molecule type" value="mRNA"/>
</dbReference>
<dbReference type="PIR" id="S53353">
    <property type="entry name" value="S53353"/>
</dbReference>
<dbReference type="BMRB" id="Q26678"/>
<dbReference type="SMR" id="Q26678"/>
<dbReference type="SwissPalm" id="Q26678"/>
<dbReference type="GO" id="GO:0031514">
    <property type="term" value="C:motile cilium"/>
    <property type="evidence" value="ECO:0007669"/>
    <property type="project" value="UniProtKB-SubCell"/>
</dbReference>
<dbReference type="GO" id="GO:0005509">
    <property type="term" value="F:calcium ion binding"/>
    <property type="evidence" value="ECO:0007669"/>
    <property type="project" value="InterPro"/>
</dbReference>
<dbReference type="CDD" id="cd00051">
    <property type="entry name" value="EFh"/>
    <property type="match status" value="2"/>
</dbReference>
<dbReference type="FunFam" id="1.10.238.10:FF:000433">
    <property type="entry name" value="Flagellar calcium-binding protein TB-24"/>
    <property type="match status" value="1"/>
</dbReference>
<dbReference type="Gene3D" id="1.10.238.10">
    <property type="entry name" value="EF-hand"/>
    <property type="match status" value="2"/>
</dbReference>
<dbReference type="InterPro" id="IPR051581">
    <property type="entry name" value="Ca-bind_SignalingProt"/>
</dbReference>
<dbReference type="InterPro" id="IPR003299">
    <property type="entry name" value="Calflagin-bd"/>
</dbReference>
<dbReference type="InterPro" id="IPR011992">
    <property type="entry name" value="EF-hand-dom_pair"/>
</dbReference>
<dbReference type="InterPro" id="IPR018247">
    <property type="entry name" value="EF_Hand_1_Ca_BS"/>
</dbReference>
<dbReference type="InterPro" id="IPR002048">
    <property type="entry name" value="EF_hand_dom"/>
</dbReference>
<dbReference type="InterPro" id="IPR054322">
    <property type="entry name" value="FCABP_EF-hand"/>
</dbReference>
<dbReference type="PANTHER" id="PTHR34524">
    <property type="entry name" value="CALCYPHOSIN"/>
    <property type="match status" value="1"/>
</dbReference>
<dbReference type="PANTHER" id="PTHR34524:SF6">
    <property type="entry name" value="CALCYPHOSINE LIKE"/>
    <property type="match status" value="1"/>
</dbReference>
<dbReference type="Pfam" id="PF13499">
    <property type="entry name" value="EF-hand_7"/>
    <property type="match status" value="2"/>
</dbReference>
<dbReference type="Pfam" id="PF22592">
    <property type="entry name" value="FCaBP_EF-hand"/>
    <property type="match status" value="2"/>
</dbReference>
<dbReference type="PRINTS" id="PR01362">
    <property type="entry name" value="CALFLAGIN"/>
</dbReference>
<dbReference type="SMART" id="SM00054">
    <property type="entry name" value="EFh"/>
    <property type="match status" value="6"/>
</dbReference>
<dbReference type="SUPFAM" id="SSF47473">
    <property type="entry name" value="EF-hand"/>
    <property type="match status" value="2"/>
</dbReference>
<dbReference type="PROSITE" id="PS00018">
    <property type="entry name" value="EF_HAND_1"/>
    <property type="match status" value="4"/>
</dbReference>
<dbReference type="PROSITE" id="PS50222">
    <property type="entry name" value="EF_HAND_2"/>
    <property type="match status" value="6"/>
</dbReference>
<protein>
    <recommendedName>
        <fullName>Flagellar calcium-binding protein TB-44A</fullName>
    </recommendedName>
    <alternativeName>
        <fullName>44 kDa calcimedin</fullName>
    </alternativeName>
    <alternativeName>
        <fullName>44 kDa calflagin</fullName>
    </alternativeName>
</protein>
<feature type="chain" id="PRO_0000073740" description="Flagellar calcium-binding protein TB-44A">
    <location>
        <begin position="1"/>
        <end position="407"/>
    </location>
</feature>
<feature type="domain" description="EF-hand 1" evidence="2">
    <location>
        <begin position="48"/>
        <end position="83"/>
    </location>
</feature>
<feature type="domain" description="EF-hand 2" evidence="2">
    <location>
        <begin position="130"/>
        <end position="165"/>
    </location>
</feature>
<feature type="domain" description="EF-hand 3" evidence="2">
    <location>
        <begin position="167"/>
        <end position="202"/>
    </location>
</feature>
<feature type="domain" description="EF-hand 4" evidence="2">
    <location>
        <begin position="237"/>
        <end position="272"/>
    </location>
</feature>
<feature type="domain" description="EF-hand 5" evidence="2">
    <location>
        <begin position="319"/>
        <end position="354"/>
    </location>
</feature>
<feature type="domain" description="EF-hand 6" evidence="2">
    <location>
        <begin position="356"/>
        <end position="391"/>
    </location>
</feature>
<feature type="region of interest" description="Disordered" evidence="3">
    <location>
        <begin position="1"/>
        <end position="27"/>
    </location>
</feature>
<feature type="region of interest" description="2 X 186 AA almost perfect repeats">
    <location>
        <begin position="25"/>
        <end position="399"/>
    </location>
</feature>
<feature type="region of interest" description="Ancestral calcium site 2" evidence="1">
    <location>
        <begin position="110"/>
        <end position="121"/>
    </location>
</feature>
<feature type="region of interest" description="Ancestral calcium site 6" evidence="1">
    <location>
        <begin position="299"/>
        <end position="310"/>
    </location>
</feature>
<feature type="binding site" evidence="2">
    <location>
        <position position="61"/>
    </location>
    <ligand>
        <name>Ca(2+)</name>
        <dbReference type="ChEBI" id="CHEBI:29108"/>
        <label>1</label>
    </ligand>
</feature>
<feature type="binding site" evidence="2">
    <location>
        <position position="63"/>
    </location>
    <ligand>
        <name>Ca(2+)</name>
        <dbReference type="ChEBI" id="CHEBI:29108"/>
        <label>1</label>
    </ligand>
</feature>
<feature type="binding site" evidence="2">
    <location>
        <position position="65"/>
    </location>
    <ligand>
        <name>Ca(2+)</name>
        <dbReference type="ChEBI" id="CHEBI:29108"/>
        <label>1</label>
    </ligand>
</feature>
<feature type="binding site" evidence="2">
    <location>
        <position position="67"/>
    </location>
    <ligand>
        <name>Ca(2+)</name>
        <dbReference type="ChEBI" id="CHEBI:29108"/>
        <label>1</label>
    </ligand>
</feature>
<feature type="binding site" evidence="2">
    <location>
        <position position="72"/>
    </location>
    <ligand>
        <name>Ca(2+)</name>
        <dbReference type="ChEBI" id="CHEBI:29108"/>
        <label>1</label>
    </ligand>
</feature>
<feature type="binding site" evidence="4">
    <location>
        <position position="143"/>
    </location>
    <ligand>
        <name>Ca(2+)</name>
        <dbReference type="ChEBI" id="CHEBI:29108"/>
        <label>2</label>
    </ligand>
</feature>
<feature type="binding site" evidence="4">
    <location>
        <position position="145"/>
    </location>
    <ligand>
        <name>Ca(2+)</name>
        <dbReference type="ChEBI" id="CHEBI:29108"/>
        <label>2</label>
    </ligand>
</feature>
<feature type="binding site" evidence="4">
    <location>
        <position position="147"/>
    </location>
    <ligand>
        <name>Ca(2+)</name>
        <dbReference type="ChEBI" id="CHEBI:29108"/>
        <label>2</label>
    </ligand>
</feature>
<feature type="binding site" evidence="4">
    <location>
        <position position="154"/>
    </location>
    <ligand>
        <name>Ca(2+)</name>
        <dbReference type="ChEBI" id="CHEBI:29108"/>
        <label>2</label>
    </ligand>
</feature>
<feature type="binding site" evidence="2">
    <location>
        <position position="180"/>
    </location>
    <ligand>
        <name>Ca(2+)</name>
        <dbReference type="ChEBI" id="CHEBI:29108"/>
        <label>3</label>
    </ligand>
</feature>
<feature type="binding site" evidence="2">
    <location>
        <position position="182"/>
    </location>
    <ligand>
        <name>Ca(2+)</name>
        <dbReference type="ChEBI" id="CHEBI:29108"/>
        <label>3</label>
    </ligand>
</feature>
<feature type="binding site" evidence="2">
    <location>
        <position position="184"/>
    </location>
    <ligand>
        <name>Ca(2+)</name>
        <dbReference type="ChEBI" id="CHEBI:29108"/>
        <label>3</label>
    </ligand>
</feature>
<feature type="binding site" evidence="2">
    <location>
        <position position="191"/>
    </location>
    <ligand>
        <name>Ca(2+)</name>
        <dbReference type="ChEBI" id="CHEBI:29108"/>
        <label>3</label>
    </ligand>
</feature>
<feature type="binding site" evidence="2">
    <location>
        <position position="250"/>
    </location>
    <ligand>
        <name>Ca(2+)</name>
        <dbReference type="ChEBI" id="CHEBI:29108"/>
        <label>4</label>
    </ligand>
</feature>
<feature type="binding site" evidence="2">
    <location>
        <position position="252"/>
    </location>
    <ligand>
        <name>Ca(2+)</name>
        <dbReference type="ChEBI" id="CHEBI:29108"/>
        <label>4</label>
    </ligand>
</feature>
<feature type="binding site" evidence="2">
    <location>
        <position position="254"/>
    </location>
    <ligand>
        <name>Ca(2+)</name>
        <dbReference type="ChEBI" id="CHEBI:29108"/>
        <label>4</label>
    </ligand>
</feature>
<feature type="binding site" evidence="2">
    <location>
        <position position="256"/>
    </location>
    <ligand>
        <name>Ca(2+)</name>
        <dbReference type="ChEBI" id="CHEBI:29108"/>
        <label>4</label>
    </ligand>
</feature>
<feature type="binding site" evidence="2">
    <location>
        <position position="261"/>
    </location>
    <ligand>
        <name>Ca(2+)</name>
        <dbReference type="ChEBI" id="CHEBI:29108"/>
        <label>4</label>
    </ligand>
</feature>
<feature type="binding site" evidence="4">
    <location>
        <position position="332"/>
    </location>
    <ligand>
        <name>Ca(2+)</name>
        <dbReference type="ChEBI" id="CHEBI:29108"/>
        <label>5</label>
    </ligand>
</feature>
<feature type="binding site" evidence="4">
    <location>
        <position position="334"/>
    </location>
    <ligand>
        <name>Ca(2+)</name>
        <dbReference type="ChEBI" id="CHEBI:29108"/>
        <label>5</label>
    </ligand>
</feature>
<feature type="binding site" evidence="4">
    <location>
        <position position="336"/>
    </location>
    <ligand>
        <name>Ca(2+)</name>
        <dbReference type="ChEBI" id="CHEBI:29108"/>
        <label>5</label>
    </ligand>
</feature>
<feature type="binding site" evidence="4">
    <location>
        <position position="343"/>
    </location>
    <ligand>
        <name>Ca(2+)</name>
        <dbReference type="ChEBI" id="CHEBI:29108"/>
        <label>5</label>
    </ligand>
</feature>
<feature type="binding site" evidence="2">
    <location>
        <position position="369"/>
    </location>
    <ligand>
        <name>Ca(2+)</name>
        <dbReference type="ChEBI" id="CHEBI:29108"/>
        <label>6</label>
    </ligand>
</feature>
<feature type="binding site" evidence="2">
    <location>
        <position position="371"/>
    </location>
    <ligand>
        <name>Ca(2+)</name>
        <dbReference type="ChEBI" id="CHEBI:29108"/>
        <label>6</label>
    </ligand>
</feature>
<feature type="binding site" evidence="2">
    <location>
        <position position="373"/>
    </location>
    <ligand>
        <name>Ca(2+)</name>
        <dbReference type="ChEBI" id="CHEBI:29108"/>
        <label>6</label>
    </ligand>
</feature>
<feature type="binding site" evidence="2">
    <location>
        <position position="380"/>
    </location>
    <ligand>
        <name>Ca(2+)</name>
        <dbReference type="ChEBI" id="CHEBI:29108"/>
        <label>6</label>
    </ligand>
</feature>
<feature type="sequence variant" description="In strain: M110.">
    <original>C</original>
    <variation>R</variation>
    <location>
        <position position="39"/>
    </location>
</feature>
<feature type="sequence variant" description="In strain: M110.">
    <original>I</original>
    <variation>P</variation>
    <location>
        <position position="80"/>
    </location>
</feature>
<feature type="sequence variant" description="In strain: M110.">
    <original>E</original>
    <variation>G</variation>
    <location>
        <position position="85"/>
    </location>
</feature>
<feature type="sequence variant" description="In strain: M110.">
    <original>C</original>
    <variation>V</variation>
    <location>
        <position position="228"/>
    </location>
</feature>
<name>FCA3_TRYBB</name>